<organism>
    <name type="scientific">Cupriavidus metallidurans (strain ATCC 43123 / DSM 2839 / NBRC 102507 / CH34)</name>
    <name type="common">Ralstonia metallidurans</name>
    <dbReference type="NCBI Taxonomy" id="266264"/>
    <lineage>
        <taxon>Bacteria</taxon>
        <taxon>Pseudomonadati</taxon>
        <taxon>Pseudomonadota</taxon>
        <taxon>Betaproteobacteria</taxon>
        <taxon>Burkholderiales</taxon>
        <taxon>Burkholderiaceae</taxon>
        <taxon>Cupriavidus</taxon>
    </lineage>
</organism>
<feature type="chain" id="PRO_1000063430" description="Phosphoribosyl-AMP cyclohydrolase">
    <location>
        <begin position="1"/>
        <end position="135"/>
    </location>
</feature>
<feature type="binding site" evidence="1">
    <location>
        <position position="78"/>
    </location>
    <ligand>
        <name>Mg(2+)</name>
        <dbReference type="ChEBI" id="CHEBI:18420"/>
    </ligand>
</feature>
<feature type="binding site" evidence="1">
    <location>
        <position position="79"/>
    </location>
    <ligand>
        <name>Zn(2+)</name>
        <dbReference type="ChEBI" id="CHEBI:29105"/>
        <note>ligand shared between dimeric partners</note>
    </ligand>
</feature>
<feature type="binding site" evidence="1">
    <location>
        <position position="80"/>
    </location>
    <ligand>
        <name>Mg(2+)</name>
        <dbReference type="ChEBI" id="CHEBI:18420"/>
    </ligand>
</feature>
<feature type="binding site" evidence="1">
    <location>
        <position position="82"/>
    </location>
    <ligand>
        <name>Mg(2+)</name>
        <dbReference type="ChEBI" id="CHEBI:18420"/>
    </ligand>
</feature>
<feature type="binding site" evidence="1">
    <location>
        <position position="96"/>
    </location>
    <ligand>
        <name>Zn(2+)</name>
        <dbReference type="ChEBI" id="CHEBI:29105"/>
        <note>ligand shared between dimeric partners</note>
    </ligand>
</feature>
<feature type="binding site" evidence="1">
    <location>
        <position position="103"/>
    </location>
    <ligand>
        <name>Zn(2+)</name>
        <dbReference type="ChEBI" id="CHEBI:29105"/>
        <note>ligand shared between dimeric partners</note>
    </ligand>
</feature>
<accession>Q1LIB3</accession>
<dbReference type="EC" id="3.5.4.19" evidence="1"/>
<dbReference type="EMBL" id="CP000352">
    <property type="protein sequence ID" value="ABF10113.1"/>
    <property type="molecule type" value="Genomic_DNA"/>
</dbReference>
<dbReference type="RefSeq" id="WP_008643058.1">
    <property type="nucleotide sequence ID" value="NC_007973.1"/>
</dbReference>
<dbReference type="SMR" id="Q1LIB3"/>
<dbReference type="STRING" id="266264.Rmet_3241"/>
<dbReference type="GeneID" id="60825565"/>
<dbReference type="KEGG" id="rme:Rmet_3241"/>
<dbReference type="eggNOG" id="COG0139">
    <property type="taxonomic scope" value="Bacteria"/>
</dbReference>
<dbReference type="HOGENOM" id="CLU_048577_5_0_4"/>
<dbReference type="UniPathway" id="UPA00031">
    <property type="reaction ID" value="UER00008"/>
</dbReference>
<dbReference type="Proteomes" id="UP000002429">
    <property type="component" value="Chromosome"/>
</dbReference>
<dbReference type="GO" id="GO:0005737">
    <property type="term" value="C:cytoplasm"/>
    <property type="evidence" value="ECO:0007669"/>
    <property type="project" value="UniProtKB-SubCell"/>
</dbReference>
<dbReference type="GO" id="GO:0000287">
    <property type="term" value="F:magnesium ion binding"/>
    <property type="evidence" value="ECO:0007669"/>
    <property type="project" value="UniProtKB-UniRule"/>
</dbReference>
<dbReference type="GO" id="GO:0004635">
    <property type="term" value="F:phosphoribosyl-AMP cyclohydrolase activity"/>
    <property type="evidence" value="ECO:0007669"/>
    <property type="project" value="UniProtKB-UniRule"/>
</dbReference>
<dbReference type="GO" id="GO:0008270">
    <property type="term" value="F:zinc ion binding"/>
    <property type="evidence" value="ECO:0007669"/>
    <property type="project" value="UniProtKB-UniRule"/>
</dbReference>
<dbReference type="GO" id="GO:0000105">
    <property type="term" value="P:L-histidine biosynthetic process"/>
    <property type="evidence" value="ECO:0007669"/>
    <property type="project" value="UniProtKB-UniRule"/>
</dbReference>
<dbReference type="FunFam" id="3.10.20.810:FF:000001">
    <property type="entry name" value="Histidine biosynthesis bifunctional protein HisIE"/>
    <property type="match status" value="1"/>
</dbReference>
<dbReference type="Gene3D" id="3.10.20.810">
    <property type="entry name" value="Phosphoribosyl-AMP cyclohydrolase"/>
    <property type="match status" value="1"/>
</dbReference>
<dbReference type="HAMAP" id="MF_01021">
    <property type="entry name" value="HisI"/>
    <property type="match status" value="1"/>
</dbReference>
<dbReference type="InterPro" id="IPR026660">
    <property type="entry name" value="PRA-CH"/>
</dbReference>
<dbReference type="InterPro" id="IPR002496">
    <property type="entry name" value="PRib_AMP_CycHydrolase_dom"/>
</dbReference>
<dbReference type="InterPro" id="IPR038019">
    <property type="entry name" value="PRib_AMP_CycHydrolase_sf"/>
</dbReference>
<dbReference type="NCBIfam" id="NF000768">
    <property type="entry name" value="PRK00051.1"/>
    <property type="match status" value="1"/>
</dbReference>
<dbReference type="PANTHER" id="PTHR42945">
    <property type="entry name" value="HISTIDINE BIOSYNTHESIS BIFUNCTIONAL PROTEIN"/>
    <property type="match status" value="1"/>
</dbReference>
<dbReference type="PANTHER" id="PTHR42945:SF1">
    <property type="entry name" value="HISTIDINE BIOSYNTHESIS BIFUNCTIONAL PROTEIN HIS7"/>
    <property type="match status" value="1"/>
</dbReference>
<dbReference type="Pfam" id="PF01502">
    <property type="entry name" value="PRA-CH"/>
    <property type="match status" value="1"/>
</dbReference>
<dbReference type="SUPFAM" id="SSF141734">
    <property type="entry name" value="HisI-like"/>
    <property type="match status" value="1"/>
</dbReference>
<sequence>MAKKWLNKVKWDDNGLVPVIVQEVGSNDVLMFAFMNRDALQRTVELGEAVFWSRSRKRLWHKGEESGHVQKVHEIRLDCDEDVVLLKVTQIDSIACHTGRHSCFFQKFEGDVESGDWQTVEPVLKDPSSIYAAKP</sequence>
<keyword id="KW-0028">Amino-acid biosynthesis</keyword>
<keyword id="KW-0963">Cytoplasm</keyword>
<keyword id="KW-0368">Histidine biosynthesis</keyword>
<keyword id="KW-0378">Hydrolase</keyword>
<keyword id="KW-0460">Magnesium</keyword>
<keyword id="KW-0479">Metal-binding</keyword>
<keyword id="KW-1185">Reference proteome</keyword>
<keyword id="KW-0862">Zinc</keyword>
<protein>
    <recommendedName>
        <fullName evidence="1">Phosphoribosyl-AMP cyclohydrolase</fullName>
        <shortName evidence="1">PRA-CH</shortName>
        <ecNumber evidence="1">3.5.4.19</ecNumber>
    </recommendedName>
</protein>
<comment type="function">
    <text evidence="1">Catalyzes the hydrolysis of the adenine ring of phosphoribosyl-AMP.</text>
</comment>
<comment type="catalytic activity">
    <reaction evidence="1">
        <text>1-(5-phospho-beta-D-ribosyl)-5'-AMP + H2O = 1-(5-phospho-beta-D-ribosyl)-5-[(5-phospho-beta-D-ribosylamino)methylideneamino]imidazole-4-carboxamide</text>
        <dbReference type="Rhea" id="RHEA:20049"/>
        <dbReference type="ChEBI" id="CHEBI:15377"/>
        <dbReference type="ChEBI" id="CHEBI:58435"/>
        <dbReference type="ChEBI" id="CHEBI:59457"/>
        <dbReference type="EC" id="3.5.4.19"/>
    </reaction>
</comment>
<comment type="cofactor">
    <cofactor evidence="1">
        <name>Mg(2+)</name>
        <dbReference type="ChEBI" id="CHEBI:18420"/>
    </cofactor>
    <text evidence="1">Binds 1 Mg(2+) ion per subunit.</text>
</comment>
<comment type="cofactor">
    <cofactor evidence="1">
        <name>Zn(2+)</name>
        <dbReference type="ChEBI" id="CHEBI:29105"/>
    </cofactor>
    <text evidence="1">Binds 1 zinc ion per subunit.</text>
</comment>
<comment type="pathway">
    <text evidence="1">Amino-acid biosynthesis; L-histidine biosynthesis; L-histidine from 5-phospho-alpha-D-ribose 1-diphosphate: step 3/9.</text>
</comment>
<comment type="subunit">
    <text evidence="1">Homodimer.</text>
</comment>
<comment type="subcellular location">
    <subcellularLocation>
        <location evidence="1">Cytoplasm</location>
    </subcellularLocation>
</comment>
<comment type="similarity">
    <text evidence="1">Belongs to the PRA-CH family.</text>
</comment>
<proteinExistence type="inferred from homology"/>
<reference key="1">
    <citation type="journal article" date="2010" name="PLoS ONE">
        <title>The complete genome sequence of Cupriavidus metallidurans strain CH34, a master survivalist in harsh and anthropogenic environments.</title>
        <authorList>
            <person name="Janssen P.J."/>
            <person name="Van Houdt R."/>
            <person name="Moors H."/>
            <person name="Monsieurs P."/>
            <person name="Morin N."/>
            <person name="Michaux A."/>
            <person name="Benotmane M.A."/>
            <person name="Leys N."/>
            <person name="Vallaeys T."/>
            <person name="Lapidus A."/>
            <person name="Monchy S."/>
            <person name="Medigue C."/>
            <person name="Taghavi S."/>
            <person name="McCorkle S."/>
            <person name="Dunn J."/>
            <person name="van der Lelie D."/>
            <person name="Mergeay M."/>
        </authorList>
    </citation>
    <scope>NUCLEOTIDE SEQUENCE [LARGE SCALE GENOMIC DNA]</scope>
    <source>
        <strain>ATCC 43123 / DSM 2839 / NBRC 102507 / CH34</strain>
    </source>
</reference>
<evidence type="ECO:0000255" key="1">
    <source>
        <dbReference type="HAMAP-Rule" id="MF_01021"/>
    </source>
</evidence>
<gene>
    <name evidence="1" type="primary">hisI</name>
    <name type="ordered locus">Rmet_3241</name>
</gene>
<name>HIS3_CUPMC</name>